<accession>Q5LIJ0</accession>
<feature type="chain" id="PRO_0000223529" description="Ribosomal RNA small subunit methyltransferase H">
    <location>
        <begin position="1"/>
        <end position="304"/>
    </location>
</feature>
<feature type="binding site" evidence="1">
    <location>
        <begin position="37"/>
        <end position="39"/>
    </location>
    <ligand>
        <name>S-adenosyl-L-methionine</name>
        <dbReference type="ChEBI" id="CHEBI:59789"/>
    </ligand>
</feature>
<feature type="binding site" evidence="1">
    <location>
        <position position="57"/>
    </location>
    <ligand>
        <name>S-adenosyl-L-methionine</name>
        <dbReference type="ChEBI" id="CHEBI:59789"/>
    </ligand>
</feature>
<feature type="binding site" evidence="1">
    <location>
        <position position="79"/>
    </location>
    <ligand>
        <name>S-adenosyl-L-methionine</name>
        <dbReference type="ChEBI" id="CHEBI:59789"/>
    </ligand>
</feature>
<feature type="binding site" evidence="1">
    <location>
        <position position="100"/>
    </location>
    <ligand>
        <name>S-adenosyl-L-methionine</name>
        <dbReference type="ChEBI" id="CHEBI:59789"/>
    </ligand>
</feature>
<feature type="binding site" evidence="1">
    <location>
        <position position="107"/>
    </location>
    <ligand>
        <name>S-adenosyl-L-methionine</name>
        <dbReference type="ChEBI" id="CHEBI:59789"/>
    </ligand>
</feature>
<keyword id="KW-0963">Cytoplasm</keyword>
<keyword id="KW-0489">Methyltransferase</keyword>
<keyword id="KW-0698">rRNA processing</keyword>
<keyword id="KW-0949">S-adenosyl-L-methionine</keyword>
<keyword id="KW-0808">Transferase</keyword>
<dbReference type="EC" id="2.1.1.199" evidence="1"/>
<dbReference type="EMBL" id="CR626927">
    <property type="protein sequence ID" value="CAH06036.1"/>
    <property type="molecule type" value="Genomic_DNA"/>
</dbReference>
<dbReference type="RefSeq" id="WP_008769221.1">
    <property type="nucleotide sequence ID" value="NC_003228.3"/>
</dbReference>
<dbReference type="SMR" id="Q5LIJ0"/>
<dbReference type="PaxDb" id="272559-BF9343_0257"/>
<dbReference type="GeneID" id="60367492"/>
<dbReference type="KEGG" id="bfs:BF9343_0257"/>
<dbReference type="eggNOG" id="COG0275">
    <property type="taxonomic scope" value="Bacteria"/>
</dbReference>
<dbReference type="HOGENOM" id="CLU_038422_2_0_10"/>
<dbReference type="Proteomes" id="UP000006731">
    <property type="component" value="Chromosome"/>
</dbReference>
<dbReference type="GO" id="GO:0005737">
    <property type="term" value="C:cytoplasm"/>
    <property type="evidence" value="ECO:0007669"/>
    <property type="project" value="UniProtKB-SubCell"/>
</dbReference>
<dbReference type="GO" id="GO:0071424">
    <property type="term" value="F:rRNA (cytosine-N4-)-methyltransferase activity"/>
    <property type="evidence" value="ECO:0007669"/>
    <property type="project" value="UniProtKB-UniRule"/>
</dbReference>
<dbReference type="GO" id="GO:0070475">
    <property type="term" value="P:rRNA base methylation"/>
    <property type="evidence" value="ECO:0007669"/>
    <property type="project" value="UniProtKB-UniRule"/>
</dbReference>
<dbReference type="FunFam" id="1.10.150.170:FF:000003">
    <property type="entry name" value="Ribosomal RNA small subunit methyltransferase H"/>
    <property type="match status" value="1"/>
</dbReference>
<dbReference type="Gene3D" id="1.10.150.170">
    <property type="entry name" value="Putative methyltransferase TM0872, insert domain"/>
    <property type="match status" value="1"/>
</dbReference>
<dbReference type="Gene3D" id="3.40.50.150">
    <property type="entry name" value="Vaccinia Virus protein VP39"/>
    <property type="match status" value="1"/>
</dbReference>
<dbReference type="HAMAP" id="MF_01007">
    <property type="entry name" value="16SrRNA_methyltr_H"/>
    <property type="match status" value="1"/>
</dbReference>
<dbReference type="InterPro" id="IPR002903">
    <property type="entry name" value="RsmH"/>
</dbReference>
<dbReference type="InterPro" id="IPR023397">
    <property type="entry name" value="SAM-dep_MeTrfase_MraW_recog"/>
</dbReference>
<dbReference type="InterPro" id="IPR029063">
    <property type="entry name" value="SAM-dependent_MTases_sf"/>
</dbReference>
<dbReference type="NCBIfam" id="TIGR00006">
    <property type="entry name" value="16S rRNA (cytosine(1402)-N(4))-methyltransferase RsmH"/>
    <property type="match status" value="1"/>
</dbReference>
<dbReference type="PANTHER" id="PTHR11265:SF0">
    <property type="entry name" value="12S RRNA N4-METHYLCYTIDINE METHYLTRANSFERASE"/>
    <property type="match status" value="1"/>
</dbReference>
<dbReference type="PANTHER" id="PTHR11265">
    <property type="entry name" value="S-ADENOSYL-METHYLTRANSFERASE MRAW"/>
    <property type="match status" value="1"/>
</dbReference>
<dbReference type="Pfam" id="PF01795">
    <property type="entry name" value="Methyltransf_5"/>
    <property type="match status" value="1"/>
</dbReference>
<dbReference type="PIRSF" id="PIRSF004486">
    <property type="entry name" value="MraW"/>
    <property type="match status" value="1"/>
</dbReference>
<dbReference type="SUPFAM" id="SSF81799">
    <property type="entry name" value="Putative methyltransferase TM0872, insert domain"/>
    <property type="match status" value="1"/>
</dbReference>
<dbReference type="SUPFAM" id="SSF53335">
    <property type="entry name" value="S-adenosyl-L-methionine-dependent methyltransferases"/>
    <property type="match status" value="1"/>
</dbReference>
<evidence type="ECO:0000255" key="1">
    <source>
        <dbReference type="HAMAP-Rule" id="MF_01007"/>
    </source>
</evidence>
<reference key="1">
    <citation type="journal article" date="2005" name="Science">
        <title>Extensive DNA inversions in the B. fragilis genome control variable gene expression.</title>
        <authorList>
            <person name="Cerdeno-Tarraga A.-M."/>
            <person name="Patrick S."/>
            <person name="Crossman L.C."/>
            <person name="Blakely G."/>
            <person name="Abratt V."/>
            <person name="Lennard N."/>
            <person name="Poxton I."/>
            <person name="Duerden B."/>
            <person name="Harris B."/>
            <person name="Quail M.A."/>
            <person name="Barron A."/>
            <person name="Clark L."/>
            <person name="Corton C."/>
            <person name="Doggett J."/>
            <person name="Holden M.T.G."/>
            <person name="Larke N."/>
            <person name="Line A."/>
            <person name="Lord A."/>
            <person name="Norbertczak H."/>
            <person name="Ormond D."/>
            <person name="Price C."/>
            <person name="Rabbinowitsch E."/>
            <person name="Woodward J."/>
            <person name="Barrell B.G."/>
            <person name="Parkhill J."/>
        </authorList>
    </citation>
    <scope>NUCLEOTIDE SEQUENCE [LARGE SCALE GENOMIC DNA]</scope>
    <source>
        <strain>ATCC 25285 / DSM 2151 / CCUG 4856 / JCM 11019 / LMG 10263 / NCTC 9343 / Onslow / VPI 2553 / EN-2</strain>
    </source>
</reference>
<name>RSMH_BACFN</name>
<organism>
    <name type="scientific">Bacteroides fragilis (strain ATCC 25285 / DSM 2151 / CCUG 4856 / JCM 11019 / LMG 10263 / NCTC 9343 / Onslow / VPI 2553 / EN-2)</name>
    <dbReference type="NCBI Taxonomy" id="272559"/>
    <lineage>
        <taxon>Bacteria</taxon>
        <taxon>Pseudomonadati</taxon>
        <taxon>Bacteroidota</taxon>
        <taxon>Bacteroidia</taxon>
        <taxon>Bacteroidales</taxon>
        <taxon>Bacteroidaceae</taxon>
        <taxon>Bacteroides</taxon>
    </lineage>
</organism>
<sequence>MKEEETTYHVPVLLKESVDAMNISPDGTYVDVTFGGGGHSREILSRLGDGGRLLGFDQDEDAERNIVNDPHFTFVRSNFRYLHNFLRYHDIGEVDAILADLGVSSHHFDDSERGFSFRFDGKLDMRMNKRAGITAADVVNTYEEERLADIFYLYGELKNSRKLASVIVKARTGQKIETIGEFLEIIKPLFGREREKKELAKIFQALRIEVNQEMEALKEMLMAATEALKPGGRLVVITYHSLEDRMVKNIMKTGNVEGKTTQDFFGNLQTPFRLVNNKVIVPDEDEITRNPRSRSAKLRIAEKK</sequence>
<gene>
    <name evidence="1" type="primary">rsmH</name>
    <name type="synonym">mraW</name>
    <name type="ordered locus">BF0261</name>
</gene>
<proteinExistence type="inferred from homology"/>
<comment type="function">
    <text evidence="1">Specifically methylates the N4 position of cytidine in position 1402 (C1402) of 16S rRNA.</text>
</comment>
<comment type="catalytic activity">
    <reaction evidence="1">
        <text>cytidine(1402) in 16S rRNA + S-adenosyl-L-methionine = N(4)-methylcytidine(1402) in 16S rRNA + S-adenosyl-L-homocysteine + H(+)</text>
        <dbReference type="Rhea" id="RHEA:42928"/>
        <dbReference type="Rhea" id="RHEA-COMP:10286"/>
        <dbReference type="Rhea" id="RHEA-COMP:10287"/>
        <dbReference type="ChEBI" id="CHEBI:15378"/>
        <dbReference type="ChEBI" id="CHEBI:57856"/>
        <dbReference type="ChEBI" id="CHEBI:59789"/>
        <dbReference type="ChEBI" id="CHEBI:74506"/>
        <dbReference type="ChEBI" id="CHEBI:82748"/>
        <dbReference type="EC" id="2.1.1.199"/>
    </reaction>
</comment>
<comment type="subcellular location">
    <subcellularLocation>
        <location evidence="1">Cytoplasm</location>
    </subcellularLocation>
</comment>
<comment type="similarity">
    <text evidence="1">Belongs to the methyltransferase superfamily. RsmH family.</text>
</comment>
<protein>
    <recommendedName>
        <fullName evidence="1">Ribosomal RNA small subunit methyltransferase H</fullName>
        <ecNumber evidence="1">2.1.1.199</ecNumber>
    </recommendedName>
    <alternativeName>
        <fullName evidence="1">16S rRNA m(4)C1402 methyltransferase</fullName>
    </alternativeName>
    <alternativeName>
        <fullName evidence="1">rRNA (cytosine-N(4)-)-methyltransferase RsmH</fullName>
    </alternativeName>
</protein>